<sequence>MWKTLGRVEQLLPYASLILRNREVLFREPKRGIDEYLENDSFFQMIPVKYREIVLPKLRRDTNKMTAALKNKVAVAIDELTVPLMWMIHFAVGYPYRYPELQLLAFAGPQRNVYVDDTTRRIQLYTDYNKNGSSEPRLKTLDGLTSDYVFYFVTVLRQMQICALGNSYDAFNHDPWMDVVGFEDPDQVTNRDISRIVLYSYMFLNTAKGCLVEYATFRQYMRELPKNAPQKLNFREMRQGLIALGRHCVGSRFETDLYESATSELMANHSVQTGRNIYGVDSFSLTSVSGTTATLLQERASERWIQWLGLESDYHCSFSSTRNAEDVVAGEAASSDHHQKISRVTRKRPREPKSTNDILVAGRKLFGSSFEFRDLHQLRLCHEIYMADTPSVAVQAPPGYGKTELFHLPLIALASKGDVKYVSFLFVPYTVLLANCMIRLSRCGCLNVAPVRNFIEEGCDGVTDLYVGIYDDLASTNFTDRIAAWENIVECTFRTNNVKLGYLIVDEFHNFETEVYRQSQFGGITNLDFDAFEKAIFLSGTAPEAVADAALQRIGLTGLAKKSMDINELKRSEDLSRGLSSYPTRMFNLIKEKSEVPLGHVHKIWKKVESQPEEALKLLLALFEIEPESKAIVVASTTNEVEELACSWRKYFRVVWIHGKLGAAEKVSRTKEFVTDGSMRVLIGTKLVTEGIDIKQLMMVIMLDNRLNIIELIQGVGRLRDGGLCYLLSRKNSWAARNRKGELPPIKEGCITEQVREFYGLESKKGKKGQHVGCCGSRTDLSADTVELIERMDRLAEKQATASMSIIALPSSFQESNSSDRCRKYCSSDEDSDTCIHGSANASTNATTNSSTNATTTASTNVRTSATTTASINVRTSAITTESTNSSTNATTTASTNVRTSATTTASINVRTSATTTESTNSNTSATTTESTDSNTSATTTESTDSNTSATTTASTNSSTNATTTASTNSSTNATTTESTNASAKEDANKDGNAEDNRFHPVTDINKESYKRKGSQMVLLERKKLKAQFPNTSENMNVLQFLGFRSDEIKHLFLYGIDVYFCPEGVFTQYGLCKGCQKMFELCVCWAGQKVSYRRMAWEALAVERMLRNDEEYKEYLEDIEPYHGDPVGYLKYFSVKRGEIYSQIQRNYAWYLAITRRRETISVLDSTRGKQGSQVFRMSGRQIKELYYKVWSNLRESKTEVLQYFLNWDEKKCREEWEAKDDTVFVEALEKVGVFQRLRSMTSAGLQGPQYVKLQFSRHHRQLRSRYELSLGMHLRDQLALGVTPSKVPHWTAFLSMLIGLFYNKTFRQKLEYLLEQISEVWLLPHWLDLANVEVLAADNTRVPLYMLMVAVHKELDSDDVPDGRFDIILLCRDSSREVGE</sequence>
<comment type="function">
    <text evidence="4">Catalyzes DNA unwinding and is involved in telomerase-independent telomere maintenance.</text>
</comment>
<comment type="induction">
    <text evidence="4">Induced in absence of telomerase TLC1.</text>
</comment>
<comment type="miscellaneous">
    <text evidence="4">The protein tested in (PubMed:9837911) started on residue 386; there are 4 identical proteins in yeast.</text>
</comment>
<comment type="similarity">
    <text evidence="5">Belongs to the helicase family. Yeast subtelomeric Y' repeat subfamily.</text>
</comment>
<gene>
    <name type="primary">YRF1-4</name>
    <name type="ordered locus">YLR466W</name>
</gene>
<reference key="1">
    <citation type="journal article" date="1997" name="Nature">
        <title>The nucleotide sequence of Saccharomyces cerevisiae chromosome XII.</title>
        <authorList>
            <person name="Johnston M."/>
            <person name="Hillier L.W."/>
            <person name="Riles L."/>
            <person name="Albermann K."/>
            <person name="Andre B."/>
            <person name="Ansorge W."/>
            <person name="Benes V."/>
            <person name="Brueckner M."/>
            <person name="Delius H."/>
            <person name="Dubois E."/>
            <person name="Duesterhoeft A."/>
            <person name="Entian K.-D."/>
            <person name="Floeth M."/>
            <person name="Goffeau A."/>
            <person name="Hebling U."/>
            <person name="Heumann K."/>
            <person name="Heuss-Neitzel D."/>
            <person name="Hilbert H."/>
            <person name="Hilger F."/>
            <person name="Kleine K."/>
            <person name="Koetter P."/>
            <person name="Louis E.J."/>
            <person name="Messenguy F."/>
            <person name="Mewes H.-W."/>
            <person name="Miosga T."/>
            <person name="Moestl D."/>
            <person name="Mueller-Auer S."/>
            <person name="Nentwich U."/>
            <person name="Obermaier B."/>
            <person name="Piravandi E."/>
            <person name="Pohl T.M."/>
            <person name="Portetelle D."/>
            <person name="Purnelle B."/>
            <person name="Rechmann S."/>
            <person name="Rieger M."/>
            <person name="Rinke M."/>
            <person name="Rose M."/>
            <person name="Scharfe M."/>
            <person name="Scherens B."/>
            <person name="Scholler P."/>
            <person name="Schwager C."/>
            <person name="Schwarz S."/>
            <person name="Underwood A.P."/>
            <person name="Urrestarazu L.A."/>
            <person name="Vandenbol M."/>
            <person name="Verhasselt P."/>
            <person name="Vierendeels F."/>
            <person name="Voet M."/>
            <person name="Volckaert G."/>
            <person name="Voss H."/>
            <person name="Wambutt R."/>
            <person name="Wedler E."/>
            <person name="Wedler H."/>
            <person name="Zimmermann F.K."/>
            <person name="Zollner A."/>
            <person name="Hani J."/>
            <person name="Hoheisel J.D."/>
        </authorList>
    </citation>
    <scope>NUCLEOTIDE SEQUENCE [LARGE SCALE GENOMIC DNA]</scope>
    <source>
        <strain>ATCC 204508 / S288c</strain>
    </source>
</reference>
<reference key="2">
    <citation type="journal article" date="2014" name="G3 (Bethesda)">
        <title>The reference genome sequence of Saccharomyces cerevisiae: Then and now.</title>
        <authorList>
            <person name="Engel S.R."/>
            <person name="Dietrich F.S."/>
            <person name="Fisk D.G."/>
            <person name="Binkley G."/>
            <person name="Balakrishnan R."/>
            <person name="Costanzo M.C."/>
            <person name="Dwight S.S."/>
            <person name="Hitz B.C."/>
            <person name="Karra K."/>
            <person name="Nash R.S."/>
            <person name="Weng S."/>
            <person name="Wong E.D."/>
            <person name="Lloyd P."/>
            <person name="Skrzypek M.S."/>
            <person name="Miyasato S.R."/>
            <person name="Simison M."/>
            <person name="Cherry J.M."/>
        </authorList>
    </citation>
    <scope>GENOME REANNOTATION</scope>
    <source>
        <strain>ATCC 204508 / S288c</strain>
    </source>
</reference>
<reference key="3">
    <citation type="journal article" date="1998" name="J. Biol. Chem.">
        <title>Y'-Help1, a DNA helicase encoded by the yeast subtelomeric Y' element, is induced in survivors defective for telomerase.</title>
        <authorList>
            <person name="Yamada M."/>
            <person name="Hayatsu N."/>
            <person name="Matsuura A."/>
            <person name="Ishikawa F."/>
        </authorList>
    </citation>
    <scope>FUNCTION AS A HELICASE</scope>
    <scope>INDUCTION</scope>
</reference>
<name>YRF14_YEAST</name>
<protein>
    <recommendedName>
        <fullName>Y' element ATP-dependent helicase protein 1 copy 4</fullName>
        <ecNumber evidence="4">5.6.2.-</ecNumber>
    </recommendedName>
</protein>
<proteinExistence type="evidence at protein level"/>
<dbReference type="EC" id="5.6.2.-" evidence="4"/>
<dbReference type="EMBL" id="U22383">
    <property type="protein sequence ID" value="AAB64729.1"/>
    <property type="molecule type" value="Genomic_DNA"/>
</dbReference>
<dbReference type="EMBL" id="BK006945">
    <property type="protein sequence ID" value="DAA09763.1"/>
    <property type="molecule type" value="Genomic_DNA"/>
</dbReference>
<dbReference type="PIR" id="S70310">
    <property type="entry name" value="S70310"/>
</dbReference>
<dbReference type="RefSeq" id="NP_013571.3">
    <property type="nucleotide sequence ID" value="NM_001182354.3"/>
</dbReference>
<dbReference type="SMR" id="O13559"/>
<dbReference type="BioGRID" id="31722">
    <property type="interactions" value="7"/>
</dbReference>
<dbReference type="DIP" id="DIP-8268N"/>
<dbReference type="FunCoup" id="O13559">
    <property type="interactions" value="100"/>
</dbReference>
<dbReference type="IntAct" id="O13559">
    <property type="interactions" value="2"/>
</dbReference>
<dbReference type="MINT" id="O13559"/>
<dbReference type="STRING" id="4932.YLR466W"/>
<dbReference type="PaxDb" id="4932-YLR466W"/>
<dbReference type="PeptideAtlas" id="O13559"/>
<dbReference type="EnsemblFungi" id="YLR466W_mRNA">
    <property type="protein sequence ID" value="YLR466W"/>
    <property type="gene ID" value="YLR466W"/>
</dbReference>
<dbReference type="GeneID" id="851187"/>
<dbReference type="KEGG" id="sce:YLR466W"/>
<dbReference type="AGR" id="SGD:S000004458"/>
<dbReference type="SGD" id="S000004458">
    <property type="gene designation" value="YRF1-4"/>
</dbReference>
<dbReference type="VEuPathDB" id="FungiDB:YLR466W"/>
<dbReference type="eggNOG" id="ENOG502QWCT">
    <property type="taxonomic scope" value="Eukaryota"/>
</dbReference>
<dbReference type="GeneTree" id="ENSGT00940000153173"/>
<dbReference type="HOGENOM" id="CLU_003044_2_0_1"/>
<dbReference type="InParanoid" id="O13559"/>
<dbReference type="OrthoDB" id="4070089at2759"/>
<dbReference type="BioCyc" id="YEAST:G3O-32516-MONOMER"/>
<dbReference type="Reactome" id="R-SCE-5689880">
    <property type="pathway name" value="Ub-specific processing proteases"/>
</dbReference>
<dbReference type="PRO" id="PR:O13559"/>
<dbReference type="Proteomes" id="UP000002311">
    <property type="component" value="Chromosome XII"/>
</dbReference>
<dbReference type="RNAct" id="O13559">
    <property type="molecule type" value="protein"/>
</dbReference>
<dbReference type="GO" id="GO:0005737">
    <property type="term" value="C:cytoplasm"/>
    <property type="evidence" value="ECO:0000318"/>
    <property type="project" value="GO_Central"/>
</dbReference>
<dbReference type="GO" id="GO:0005634">
    <property type="term" value="C:nucleus"/>
    <property type="evidence" value="ECO:0000305"/>
    <property type="project" value="SGD"/>
</dbReference>
<dbReference type="GO" id="GO:0005524">
    <property type="term" value="F:ATP binding"/>
    <property type="evidence" value="ECO:0007669"/>
    <property type="project" value="UniProtKB-KW"/>
</dbReference>
<dbReference type="GO" id="GO:0016887">
    <property type="term" value="F:ATP hydrolysis activity"/>
    <property type="evidence" value="ECO:0007669"/>
    <property type="project" value="RHEA"/>
</dbReference>
<dbReference type="GO" id="GO:0003678">
    <property type="term" value="F:DNA helicase activity"/>
    <property type="evidence" value="ECO:0000314"/>
    <property type="project" value="SGD"/>
</dbReference>
<dbReference type="GO" id="GO:0003676">
    <property type="term" value="F:nucleic acid binding"/>
    <property type="evidence" value="ECO:0007669"/>
    <property type="project" value="InterPro"/>
</dbReference>
<dbReference type="GO" id="GO:0000722">
    <property type="term" value="P:telomere maintenance via recombination"/>
    <property type="evidence" value="ECO:0000316"/>
    <property type="project" value="SGD"/>
</dbReference>
<dbReference type="FunFam" id="3.40.50.300:FF:001914">
    <property type="entry name" value="YML133C-like protein"/>
    <property type="match status" value="1"/>
</dbReference>
<dbReference type="FunFam" id="3.40.50.300:FF:002410">
    <property type="entry name" value="YML133C-like protein"/>
    <property type="match status" value="1"/>
</dbReference>
<dbReference type="Gene3D" id="3.40.50.300">
    <property type="entry name" value="P-loop containing nucleotide triphosphate hydrolases"/>
    <property type="match status" value="1"/>
</dbReference>
<dbReference type="InterPro" id="IPR011545">
    <property type="entry name" value="DEAD/DEAH_box_helicase_dom"/>
</dbReference>
<dbReference type="InterPro" id="IPR014001">
    <property type="entry name" value="Helicase_ATP-bd"/>
</dbReference>
<dbReference type="InterPro" id="IPR001650">
    <property type="entry name" value="Helicase_C-like"/>
</dbReference>
<dbReference type="InterPro" id="IPR027417">
    <property type="entry name" value="P-loop_NTPase"/>
</dbReference>
<dbReference type="InterPro" id="IPR051363">
    <property type="entry name" value="RLR_Helicase"/>
</dbReference>
<dbReference type="PANTHER" id="PTHR14074:SF39">
    <property type="entry name" value="FANCONI ANEMIA GROUP M PROTEIN"/>
    <property type="match status" value="1"/>
</dbReference>
<dbReference type="PANTHER" id="PTHR14074">
    <property type="entry name" value="HELICASE WITH DEATH DOMAIN-RELATED"/>
    <property type="match status" value="1"/>
</dbReference>
<dbReference type="Pfam" id="PF00270">
    <property type="entry name" value="DEAD"/>
    <property type="match status" value="1"/>
</dbReference>
<dbReference type="Pfam" id="PF00271">
    <property type="entry name" value="Helicase_C"/>
    <property type="match status" value="1"/>
</dbReference>
<dbReference type="SMART" id="SM00487">
    <property type="entry name" value="DEXDc"/>
    <property type="match status" value="1"/>
</dbReference>
<dbReference type="SMART" id="SM00490">
    <property type="entry name" value="HELICc"/>
    <property type="match status" value="1"/>
</dbReference>
<dbReference type="SUPFAM" id="SSF52540">
    <property type="entry name" value="P-loop containing nucleoside triphosphate hydrolases"/>
    <property type="match status" value="1"/>
</dbReference>
<dbReference type="PROSITE" id="PS51192">
    <property type="entry name" value="HELICASE_ATP_BIND_1"/>
    <property type="match status" value="1"/>
</dbReference>
<dbReference type="PROSITE" id="PS51194">
    <property type="entry name" value="HELICASE_CTER"/>
    <property type="match status" value="1"/>
</dbReference>
<organism>
    <name type="scientific">Saccharomyces cerevisiae (strain ATCC 204508 / S288c)</name>
    <name type="common">Baker's yeast</name>
    <dbReference type="NCBI Taxonomy" id="559292"/>
    <lineage>
        <taxon>Eukaryota</taxon>
        <taxon>Fungi</taxon>
        <taxon>Dikarya</taxon>
        <taxon>Ascomycota</taxon>
        <taxon>Saccharomycotina</taxon>
        <taxon>Saccharomycetes</taxon>
        <taxon>Saccharomycetales</taxon>
        <taxon>Saccharomycetaceae</taxon>
        <taxon>Saccharomyces</taxon>
    </lineage>
</organism>
<keyword id="KW-0067">ATP-binding</keyword>
<keyword id="KW-0347">Helicase</keyword>
<keyword id="KW-0378">Hydrolase</keyword>
<keyword id="KW-0413">Isomerase</keyword>
<keyword id="KW-0547">Nucleotide-binding</keyword>
<keyword id="KW-1185">Reference proteome</keyword>
<keyword id="KW-0677">Repeat</keyword>
<evidence type="ECO:0000255" key="1">
    <source>
        <dbReference type="PROSITE-ProRule" id="PRU00541"/>
    </source>
</evidence>
<evidence type="ECO:0000255" key="2">
    <source>
        <dbReference type="PROSITE-ProRule" id="PRU00542"/>
    </source>
</evidence>
<evidence type="ECO:0000256" key="3">
    <source>
        <dbReference type="SAM" id="MobiDB-lite"/>
    </source>
</evidence>
<evidence type="ECO:0000269" key="4">
    <source>
    </source>
</evidence>
<evidence type="ECO:0000305" key="5"/>
<accession>O13559</accession>
<accession>D6VZ97</accession>
<feature type="chain" id="PRO_0000102204" description="Y' element ATP-dependent helicase protein 1 copy 4">
    <location>
        <begin position="1"/>
        <end position="1382"/>
    </location>
</feature>
<feature type="domain" description="Helicase ATP-binding" evidence="1">
    <location>
        <begin position="383"/>
        <end position="560"/>
    </location>
</feature>
<feature type="domain" description="Helicase C-terminal" evidence="2">
    <location>
        <begin position="617"/>
        <end position="766"/>
    </location>
</feature>
<feature type="region of interest" description="Disordered" evidence="3">
    <location>
        <begin position="840"/>
        <end position="864"/>
    </location>
</feature>
<feature type="region of interest" description="Disordered" evidence="3">
    <location>
        <begin position="880"/>
        <end position="1007"/>
    </location>
</feature>
<feature type="compositionally biased region" description="Low complexity" evidence="3">
    <location>
        <begin position="880"/>
        <end position="983"/>
    </location>
</feature>
<feature type="compositionally biased region" description="Basic and acidic residues" evidence="3">
    <location>
        <begin position="984"/>
        <end position="1007"/>
    </location>
</feature>
<feature type="binding site" evidence="1">
    <location>
        <begin position="396"/>
        <end position="403"/>
    </location>
    <ligand>
        <name>ATP</name>
        <dbReference type="ChEBI" id="CHEBI:30616"/>
    </ligand>
</feature>